<comment type="function">
    <text evidence="1">Required for proper folding and/or the stability of a subset of proteins in the endoplasmic reticulum. Component of glycosylphosphatidylinositol-mannosyltransferase 1 which transfers the first of the 4 mannoses in the GPI-anchor precursors during GPI-anchor biosynthesis. Probably acts by stabilizing the mannosyltransferase gpi14 (By similarity).</text>
</comment>
<comment type="pathway">
    <text>Glycolipid biosynthesis; glycosylphosphatidylinositol-anchor biosynthesis.</text>
</comment>
<comment type="subcellular location">
    <subcellularLocation>
        <location evidence="1">Endoplasmic reticulum membrane</location>
        <topology evidence="1">Single-pass type III membrane protein</topology>
    </subcellularLocation>
</comment>
<comment type="similarity">
    <text evidence="3">Belongs to the PIGX family.</text>
</comment>
<comment type="sequence caution" evidence="3">
    <conflict type="erroneous gene model prediction">
        <sequence resource="EMBL-CDS" id="EAL91914"/>
    </conflict>
</comment>
<proteinExistence type="inferred from homology"/>
<dbReference type="EMBL" id="AAHF01000003">
    <property type="protein sequence ID" value="EAL91914.1"/>
    <property type="status" value="ALT_SEQ"/>
    <property type="molecule type" value="Genomic_DNA"/>
</dbReference>
<dbReference type="RefSeq" id="XP_753952.1">
    <property type="nucleotide sequence ID" value="XM_748859.1"/>
</dbReference>
<dbReference type="SMR" id="Q4WU12"/>
<dbReference type="STRING" id="330879.Q4WU12"/>
<dbReference type="GlyCosmos" id="Q4WU12">
    <property type="glycosylation" value="1 site, No reported glycans"/>
</dbReference>
<dbReference type="GeneID" id="3510875"/>
<dbReference type="KEGG" id="afm:AFUA_5G06810"/>
<dbReference type="eggNOG" id="ENOG502QS8N">
    <property type="taxonomic scope" value="Eukaryota"/>
</dbReference>
<dbReference type="HOGENOM" id="CLU_030047_0_0_1"/>
<dbReference type="InParanoid" id="Q4WU12"/>
<dbReference type="OrthoDB" id="5546453at2759"/>
<dbReference type="UniPathway" id="UPA00196"/>
<dbReference type="Proteomes" id="UP000002530">
    <property type="component" value="Chromosome 5"/>
</dbReference>
<dbReference type="GO" id="GO:0005789">
    <property type="term" value="C:endoplasmic reticulum membrane"/>
    <property type="evidence" value="ECO:0007669"/>
    <property type="project" value="UniProtKB-SubCell"/>
</dbReference>
<dbReference type="GO" id="GO:1990529">
    <property type="term" value="C:glycosylphosphatidylinositol-mannosyltransferase I complex"/>
    <property type="evidence" value="ECO:0000318"/>
    <property type="project" value="GO_Central"/>
</dbReference>
<dbReference type="GO" id="GO:0006506">
    <property type="term" value="P:GPI anchor biosynthetic process"/>
    <property type="evidence" value="ECO:0000318"/>
    <property type="project" value="GO_Central"/>
</dbReference>
<dbReference type="InterPro" id="IPR042322">
    <property type="entry name" value="Pbn1"/>
</dbReference>
<dbReference type="InterPro" id="IPR013233">
    <property type="entry name" value="PIG-X/PBN1"/>
</dbReference>
<dbReference type="PANTHER" id="PTHR28533">
    <property type="entry name" value="PROTEIN PBN1"/>
    <property type="match status" value="1"/>
</dbReference>
<dbReference type="PANTHER" id="PTHR28533:SF1">
    <property type="entry name" value="PROTEIN PBN1"/>
    <property type="match status" value="1"/>
</dbReference>
<dbReference type="Pfam" id="PF08320">
    <property type="entry name" value="PIG-X"/>
    <property type="match status" value="1"/>
</dbReference>
<dbReference type="SMART" id="SM00780">
    <property type="entry name" value="PIG-X"/>
    <property type="match status" value="1"/>
</dbReference>
<feature type="chain" id="PRO_0000246299" description="Protein pbn1">
    <location>
        <begin position="1"/>
        <end position="489"/>
    </location>
</feature>
<feature type="topological domain" description="Lumenal" evidence="2">
    <location>
        <begin position="1"/>
        <end position="448"/>
    </location>
</feature>
<feature type="transmembrane region" description="Helical" evidence="2">
    <location>
        <begin position="449"/>
        <end position="469"/>
    </location>
</feature>
<feature type="topological domain" description="Cytoplasmic" evidence="2">
    <location>
        <begin position="470"/>
        <end position="489"/>
    </location>
</feature>
<feature type="glycosylation site" description="N-linked (GlcNAc...) asparagine" evidence="2">
    <location>
        <position position="346"/>
    </location>
</feature>
<organism>
    <name type="scientific">Aspergillus fumigatus (strain ATCC MYA-4609 / CBS 101355 / FGSC A1100 / Af293)</name>
    <name type="common">Neosartorya fumigata</name>
    <dbReference type="NCBI Taxonomy" id="330879"/>
    <lineage>
        <taxon>Eukaryota</taxon>
        <taxon>Fungi</taxon>
        <taxon>Dikarya</taxon>
        <taxon>Ascomycota</taxon>
        <taxon>Pezizomycotina</taxon>
        <taxon>Eurotiomycetes</taxon>
        <taxon>Eurotiomycetidae</taxon>
        <taxon>Eurotiales</taxon>
        <taxon>Aspergillaceae</taxon>
        <taxon>Aspergillus</taxon>
        <taxon>Aspergillus subgen. Fumigati</taxon>
    </lineage>
</organism>
<protein>
    <recommendedName>
        <fullName>Protein pbn1</fullName>
    </recommendedName>
</protein>
<accession>Q4WU12</accession>
<name>PBN1_ASPFU</name>
<evidence type="ECO:0000250" key="1"/>
<evidence type="ECO:0000255" key="2"/>
<evidence type="ECO:0000305" key="3"/>
<keyword id="KW-0256">Endoplasmic reticulum</keyword>
<keyword id="KW-0325">Glycoprotein</keyword>
<keyword id="KW-0337">GPI-anchor biosynthesis</keyword>
<keyword id="KW-0472">Membrane</keyword>
<keyword id="KW-1185">Reference proteome</keyword>
<keyword id="KW-0812">Transmembrane</keyword>
<keyword id="KW-1133">Transmembrane helix</keyword>
<gene>
    <name type="primary">pbn1</name>
    <name type="ORF">AFUA_5G06810</name>
</gene>
<sequence>MRRRITFVQRPESPFHVDQAVLTSDALSITHLDAAREERATFGFDELPAEIWQVLKSSHELHIRWATERPYEIGAPFSSRISPGLHVYYTPGTARETGVGLCSLLKTVFDESLECQSLRYYSRLPSLQNLVAFIQHKFCDRSDEKCVHHAESILSADSVDVNYDSISHALTVSGYWSTSPGQGWTEQIRKHAADTHQVEVGLLGVESATEPEELKMEPTLFSFPSRHHPLPADATYTVSFPAPTGLHPTLTISMPRASLRRPPAPPDATCALHTYLTLPSWIFGDKYQLSTTDRLFLSSHNLAALRAVAGETDLEAPDWVVSRWGSNWLLELATPLRPDTSPEEWNASIPLHLRYLTPSESGYRSAAVPWPIVFWACTAEDGTKMGVNPFDRVNLGWEGLFGARTMFYQLHPAPAEGKDRLVEELDVPVLRLREDAGFFQSKTIELGTVVVVGLGLLWVLWKLGLVLWIAGTGRSTRAQKRTDKHRKAE</sequence>
<reference key="1">
    <citation type="journal article" date="2005" name="Nature">
        <title>Genomic sequence of the pathogenic and allergenic filamentous fungus Aspergillus fumigatus.</title>
        <authorList>
            <person name="Nierman W.C."/>
            <person name="Pain A."/>
            <person name="Anderson M.J."/>
            <person name="Wortman J.R."/>
            <person name="Kim H.S."/>
            <person name="Arroyo J."/>
            <person name="Berriman M."/>
            <person name="Abe K."/>
            <person name="Archer D.B."/>
            <person name="Bermejo C."/>
            <person name="Bennett J.W."/>
            <person name="Bowyer P."/>
            <person name="Chen D."/>
            <person name="Collins M."/>
            <person name="Coulsen R."/>
            <person name="Davies R."/>
            <person name="Dyer P.S."/>
            <person name="Farman M.L."/>
            <person name="Fedorova N."/>
            <person name="Fedorova N.D."/>
            <person name="Feldblyum T.V."/>
            <person name="Fischer R."/>
            <person name="Fosker N."/>
            <person name="Fraser A."/>
            <person name="Garcia J.L."/>
            <person name="Garcia M.J."/>
            <person name="Goble A."/>
            <person name="Goldman G.H."/>
            <person name="Gomi K."/>
            <person name="Griffith-Jones S."/>
            <person name="Gwilliam R."/>
            <person name="Haas B.J."/>
            <person name="Haas H."/>
            <person name="Harris D.E."/>
            <person name="Horiuchi H."/>
            <person name="Huang J."/>
            <person name="Humphray S."/>
            <person name="Jimenez J."/>
            <person name="Keller N."/>
            <person name="Khouri H."/>
            <person name="Kitamoto K."/>
            <person name="Kobayashi T."/>
            <person name="Konzack S."/>
            <person name="Kulkarni R."/>
            <person name="Kumagai T."/>
            <person name="Lafton A."/>
            <person name="Latge J.-P."/>
            <person name="Li W."/>
            <person name="Lord A."/>
            <person name="Lu C."/>
            <person name="Majoros W.H."/>
            <person name="May G.S."/>
            <person name="Miller B.L."/>
            <person name="Mohamoud Y."/>
            <person name="Molina M."/>
            <person name="Monod M."/>
            <person name="Mouyna I."/>
            <person name="Mulligan S."/>
            <person name="Murphy L.D."/>
            <person name="O'Neil S."/>
            <person name="Paulsen I."/>
            <person name="Penalva M.A."/>
            <person name="Pertea M."/>
            <person name="Price C."/>
            <person name="Pritchard B.L."/>
            <person name="Quail M.A."/>
            <person name="Rabbinowitsch E."/>
            <person name="Rawlins N."/>
            <person name="Rajandream M.A."/>
            <person name="Reichard U."/>
            <person name="Renauld H."/>
            <person name="Robson G.D."/>
            <person name="Rodriguez de Cordoba S."/>
            <person name="Rodriguez-Pena J.M."/>
            <person name="Ronning C.M."/>
            <person name="Rutter S."/>
            <person name="Salzberg S.L."/>
            <person name="Sanchez M."/>
            <person name="Sanchez-Ferrero J.C."/>
            <person name="Saunders D."/>
            <person name="Seeger K."/>
            <person name="Squares R."/>
            <person name="Squares S."/>
            <person name="Takeuchi M."/>
            <person name="Tekaia F."/>
            <person name="Turner G."/>
            <person name="Vazquez de Aldana C.R."/>
            <person name="Weidman J."/>
            <person name="White O."/>
            <person name="Woodward J.R."/>
            <person name="Yu J.-H."/>
            <person name="Fraser C.M."/>
            <person name="Galagan J.E."/>
            <person name="Asai K."/>
            <person name="Machida M."/>
            <person name="Hall N."/>
            <person name="Barrell B.G."/>
            <person name="Denning D.W."/>
        </authorList>
    </citation>
    <scope>NUCLEOTIDE SEQUENCE [LARGE SCALE GENOMIC DNA]</scope>
    <source>
        <strain>ATCC MYA-4609 / CBS 101355 / FGSC A1100 / Af293</strain>
    </source>
</reference>